<comment type="function">
    <text evidence="1">Splits dipeptides with a prolyl residue in the C-terminal position.</text>
</comment>
<comment type="catalytic activity">
    <reaction evidence="1">
        <text>Xaa-L-Pro dipeptide + H2O = an L-alpha-amino acid + L-proline</text>
        <dbReference type="Rhea" id="RHEA:76407"/>
        <dbReference type="ChEBI" id="CHEBI:15377"/>
        <dbReference type="ChEBI" id="CHEBI:59869"/>
        <dbReference type="ChEBI" id="CHEBI:60039"/>
        <dbReference type="ChEBI" id="CHEBI:195196"/>
        <dbReference type="EC" id="3.4.13.9"/>
    </reaction>
</comment>
<comment type="cofactor">
    <cofactor evidence="1">
        <name>Mn(2+)</name>
        <dbReference type="ChEBI" id="CHEBI:29035"/>
    </cofactor>
    <text evidence="1">Binds 2 manganese ions per subunit.</text>
</comment>
<comment type="similarity">
    <text evidence="1">Belongs to the peptidase M24B family. Bacterial-type prolidase subfamily.</text>
</comment>
<evidence type="ECO:0000255" key="1">
    <source>
        <dbReference type="HAMAP-Rule" id="MF_01279"/>
    </source>
</evidence>
<gene>
    <name evidence="1" type="primary">pepQ</name>
    <name type="ordered locus">AHA_0141</name>
</gene>
<name>PEPQ_AERHH</name>
<dbReference type="EC" id="3.4.13.9" evidence="1"/>
<dbReference type="EMBL" id="CP000462">
    <property type="protein sequence ID" value="ABK36051.1"/>
    <property type="molecule type" value="Genomic_DNA"/>
</dbReference>
<dbReference type="RefSeq" id="WP_011704167.1">
    <property type="nucleotide sequence ID" value="NC_008570.1"/>
</dbReference>
<dbReference type="RefSeq" id="YP_854678.1">
    <property type="nucleotide sequence ID" value="NC_008570.1"/>
</dbReference>
<dbReference type="SMR" id="A0KEL3"/>
<dbReference type="STRING" id="380703.AHA_0141"/>
<dbReference type="MEROPS" id="M24.003"/>
<dbReference type="EnsemblBacteria" id="ABK36051">
    <property type="protein sequence ID" value="ABK36051"/>
    <property type="gene ID" value="AHA_0141"/>
</dbReference>
<dbReference type="GeneID" id="4490322"/>
<dbReference type="KEGG" id="aha:AHA_0141"/>
<dbReference type="PATRIC" id="fig|380703.7.peg.135"/>
<dbReference type="eggNOG" id="COG0006">
    <property type="taxonomic scope" value="Bacteria"/>
</dbReference>
<dbReference type="HOGENOM" id="CLU_050675_0_0_6"/>
<dbReference type="OrthoDB" id="9806388at2"/>
<dbReference type="Proteomes" id="UP000000756">
    <property type="component" value="Chromosome"/>
</dbReference>
<dbReference type="GO" id="GO:0005829">
    <property type="term" value="C:cytosol"/>
    <property type="evidence" value="ECO:0007669"/>
    <property type="project" value="TreeGrafter"/>
</dbReference>
<dbReference type="GO" id="GO:0004177">
    <property type="term" value="F:aminopeptidase activity"/>
    <property type="evidence" value="ECO:0007669"/>
    <property type="project" value="TreeGrafter"/>
</dbReference>
<dbReference type="GO" id="GO:0046872">
    <property type="term" value="F:metal ion binding"/>
    <property type="evidence" value="ECO:0007669"/>
    <property type="project" value="UniProtKB-KW"/>
</dbReference>
<dbReference type="GO" id="GO:0008235">
    <property type="term" value="F:metalloexopeptidase activity"/>
    <property type="evidence" value="ECO:0007669"/>
    <property type="project" value="UniProtKB-UniRule"/>
</dbReference>
<dbReference type="GO" id="GO:0016795">
    <property type="term" value="F:phosphoric triester hydrolase activity"/>
    <property type="evidence" value="ECO:0007669"/>
    <property type="project" value="InterPro"/>
</dbReference>
<dbReference type="GO" id="GO:0102009">
    <property type="term" value="F:proline dipeptidase activity"/>
    <property type="evidence" value="ECO:0007669"/>
    <property type="project" value="UniProtKB-EC"/>
</dbReference>
<dbReference type="GO" id="GO:0006508">
    <property type="term" value="P:proteolysis"/>
    <property type="evidence" value="ECO:0007669"/>
    <property type="project" value="UniProtKB-KW"/>
</dbReference>
<dbReference type="Gene3D" id="3.90.230.10">
    <property type="entry name" value="Creatinase/methionine aminopeptidase superfamily"/>
    <property type="match status" value="1"/>
</dbReference>
<dbReference type="Gene3D" id="3.40.350.10">
    <property type="entry name" value="Creatinase/prolidase N-terminal domain"/>
    <property type="match status" value="1"/>
</dbReference>
<dbReference type="HAMAP" id="MF_01279">
    <property type="entry name" value="X_Pro_dipeptid"/>
    <property type="match status" value="1"/>
</dbReference>
<dbReference type="InterPro" id="IPR029149">
    <property type="entry name" value="Creatin/AminoP/Spt16_N"/>
</dbReference>
<dbReference type="InterPro" id="IPR036005">
    <property type="entry name" value="Creatinase/aminopeptidase-like"/>
</dbReference>
<dbReference type="InterPro" id="IPR048819">
    <property type="entry name" value="PepQ_N"/>
</dbReference>
<dbReference type="InterPro" id="IPR000994">
    <property type="entry name" value="Pept_M24"/>
</dbReference>
<dbReference type="InterPro" id="IPR001131">
    <property type="entry name" value="Peptidase_M24B_aminopep-P_CS"/>
</dbReference>
<dbReference type="InterPro" id="IPR052433">
    <property type="entry name" value="X-Pro_dipept-like"/>
</dbReference>
<dbReference type="InterPro" id="IPR022846">
    <property type="entry name" value="X_Pro_dipept"/>
</dbReference>
<dbReference type="NCBIfam" id="NF010133">
    <property type="entry name" value="PRK13607.1"/>
    <property type="match status" value="1"/>
</dbReference>
<dbReference type="PANTHER" id="PTHR43226">
    <property type="entry name" value="XAA-PRO AMINOPEPTIDASE 3"/>
    <property type="match status" value="1"/>
</dbReference>
<dbReference type="PANTHER" id="PTHR43226:SF8">
    <property type="entry name" value="XAA-PRO DIPEPTIDASE"/>
    <property type="match status" value="1"/>
</dbReference>
<dbReference type="Pfam" id="PF21216">
    <property type="entry name" value="PepQ_N"/>
    <property type="match status" value="1"/>
</dbReference>
<dbReference type="Pfam" id="PF00557">
    <property type="entry name" value="Peptidase_M24"/>
    <property type="match status" value="1"/>
</dbReference>
<dbReference type="SUPFAM" id="SSF55920">
    <property type="entry name" value="Creatinase/aminopeptidase"/>
    <property type="match status" value="1"/>
</dbReference>
<dbReference type="PROSITE" id="PS00491">
    <property type="entry name" value="PROLINE_PEPTIDASE"/>
    <property type="match status" value="1"/>
</dbReference>
<keyword id="KW-0224">Dipeptidase</keyword>
<keyword id="KW-0378">Hydrolase</keyword>
<keyword id="KW-0464">Manganese</keyword>
<keyword id="KW-0479">Metal-binding</keyword>
<keyword id="KW-0482">Metalloprotease</keyword>
<keyword id="KW-0645">Protease</keyword>
<keyword id="KW-1185">Reference proteome</keyword>
<sequence length="440" mass="50049">MSSYSQLFAQHLDTLQQRTRDILQQQGLSGLAIHSGQTHRIFLDDQDYPFKVNPQFKAWLPVLDNPHCWLLVDGVNKPVLLFYRPVDFWHKVAELPNAFWVDFFDIRFLTRPEQVADHLPANKQEWAYLGGHLEVAELLGLGQPNPEAVLNYLHYHRAYKTAYELECLRDANRIGVRGHIAAKDSFMAGASEFEINLAYMKAVGQGANEAPYGNIVAINRNAAILHYTHLSAQRVPDAERYSFLIDAGVDVHGYASDITRTWAWRRGEFADLIAALDAQQQEIIEEIKPGRRYSELHLQMHHRLARLLQATELVDMSVDEMIHTGVTNVFFPHGLGHFLGLQVHDAGGFMQDERGTHLSAPEQFPYLRCTRVMEVGQVFTIEPGLYFIDSLLEPLRLGEQGKRVNWNKVEALRPYGGIRIEDNVVLHANGVENLTRQAGL</sequence>
<protein>
    <recommendedName>
        <fullName evidence="1">Xaa-Pro dipeptidase</fullName>
        <shortName evidence="1">X-Pro dipeptidase</shortName>
        <ecNumber evidence="1">3.4.13.9</ecNumber>
    </recommendedName>
    <alternativeName>
        <fullName evidence="1">Imidodipeptidase</fullName>
    </alternativeName>
    <alternativeName>
        <fullName evidence="1">Proline dipeptidase</fullName>
        <shortName evidence="1">Prolidase</shortName>
    </alternativeName>
</protein>
<accession>A0KEL3</accession>
<proteinExistence type="inferred from homology"/>
<feature type="chain" id="PRO_0000303837" description="Xaa-Pro dipeptidase">
    <location>
        <begin position="1"/>
        <end position="440"/>
    </location>
</feature>
<feature type="binding site" evidence="1">
    <location>
        <position position="246"/>
    </location>
    <ligand>
        <name>Mn(2+)</name>
        <dbReference type="ChEBI" id="CHEBI:29035"/>
        <label>2</label>
    </ligand>
</feature>
<feature type="binding site" evidence="1">
    <location>
        <position position="257"/>
    </location>
    <ligand>
        <name>Mn(2+)</name>
        <dbReference type="ChEBI" id="CHEBI:29035"/>
        <label>1</label>
    </ligand>
</feature>
<feature type="binding site" evidence="1">
    <location>
        <position position="257"/>
    </location>
    <ligand>
        <name>Mn(2+)</name>
        <dbReference type="ChEBI" id="CHEBI:29035"/>
        <label>2</label>
    </ligand>
</feature>
<feature type="binding site" evidence="1">
    <location>
        <position position="337"/>
    </location>
    <ligand>
        <name>Mn(2+)</name>
        <dbReference type="ChEBI" id="CHEBI:29035"/>
        <label>1</label>
    </ligand>
</feature>
<feature type="binding site" evidence="1">
    <location>
        <position position="382"/>
    </location>
    <ligand>
        <name>Mn(2+)</name>
        <dbReference type="ChEBI" id="CHEBI:29035"/>
        <label>1</label>
    </ligand>
</feature>
<feature type="binding site" evidence="1">
    <location>
        <position position="421"/>
    </location>
    <ligand>
        <name>Mn(2+)</name>
        <dbReference type="ChEBI" id="CHEBI:29035"/>
        <label>1</label>
    </ligand>
</feature>
<feature type="binding site" evidence="1">
    <location>
        <position position="421"/>
    </location>
    <ligand>
        <name>Mn(2+)</name>
        <dbReference type="ChEBI" id="CHEBI:29035"/>
        <label>2</label>
    </ligand>
</feature>
<organism>
    <name type="scientific">Aeromonas hydrophila subsp. hydrophila (strain ATCC 7966 / DSM 30187 / BCRC 13018 / CCUG 14551 / JCM 1027 / KCTC 2358 / NCIMB 9240 / NCTC 8049)</name>
    <dbReference type="NCBI Taxonomy" id="380703"/>
    <lineage>
        <taxon>Bacteria</taxon>
        <taxon>Pseudomonadati</taxon>
        <taxon>Pseudomonadota</taxon>
        <taxon>Gammaproteobacteria</taxon>
        <taxon>Aeromonadales</taxon>
        <taxon>Aeromonadaceae</taxon>
        <taxon>Aeromonas</taxon>
    </lineage>
</organism>
<reference key="1">
    <citation type="journal article" date="2006" name="J. Bacteriol.">
        <title>Genome sequence of Aeromonas hydrophila ATCC 7966T: jack of all trades.</title>
        <authorList>
            <person name="Seshadri R."/>
            <person name="Joseph S.W."/>
            <person name="Chopra A.K."/>
            <person name="Sha J."/>
            <person name="Shaw J."/>
            <person name="Graf J."/>
            <person name="Haft D.H."/>
            <person name="Wu M."/>
            <person name="Ren Q."/>
            <person name="Rosovitz M.J."/>
            <person name="Madupu R."/>
            <person name="Tallon L."/>
            <person name="Kim M."/>
            <person name="Jin S."/>
            <person name="Vuong H."/>
            <person name="Stine O.C."/>
            <person name="Ali A."/>
            <person name="Horneman A.J."/>
            <person name="Heidelberg J.F."/>
        </authorList>
    </citation>
    <scope>NUCLEOTIDE SEQUENCE [LARGE SCALE GENOMIC DNA]</scope>
    <source>
        <strain>ATCC 7966 / DSM 30187 / BCRC 13018 / CCUG 14551 / JCM 1027 / KCTC 2358 / NCIMB 9240 / NCTC 8049</strain>
    </source>
</reference>